<sequence length="386" mass="41180">MTAGSDLDDFRGLLAKAFDERVVAWTAEAEAQERFPRQLIEHLGVCGVFDAKWATDARPDVGKLVELAFALGQLASAGIGVGVSLHDSAIAILRRFGKSDYLRDICDQAIRGAAVLCIGASEESGGSDLQIVETEIRSRDGGFEVRGVKKFVSLSPIADHIMVVARSVDHDPTSRHGNVAVVAVPAAQVSVQTPYRKVGAGPLDTAAVCIDTWVPADALVARAGTGLAAISWGLAHERMSIAGQIAASCQRAIGITLARMMSRRQFGQTLFEHQALRLRMADLQARVDLLRYALHGIAEQGRLELRTAAAVKVTAARLGEEVISECMHIFGGAGYLVDETTLGKWWRDMKLARVGGGTDEVLWELVAAGMTPDHDGYAAVVGASKA</sequence>
<feature type="chain" id="PRO_0000000539" description="Acyl-[acyl-carrier-protein] dehydrogenase MbtN">
    <location>
        <begin position="1"/>
        <end position="386"/>
    </location>
</feature>
<reference key="1">
    <citation type="journal article" date="2003" name="Proc. Natl. Acad. Sci. U.S.A.">
        <title>The complete genome sequence of Mycobacterium bovis.</title>
        <authorList>
            <person name="Garnier T."/>
            <person name="Eiglmeier K."/>
            <person name="Camus J.-C."/>
            <person name="Medina N."/>
            <person name="Mansoor H."/>
            <person name="Pryor M."/>
            <person name="Duthoy S."/>
            <person name="Grondin S."/>
            <person name="Lacroix C."/>
            <person name="Monsempe C."/>
            <person name="Simon S."/>
            <person name="Harris B."/>
            <person name="Atkin R."/>
            <person name="Doggett J."/>
            <person name="Mayes R."/>
            <person name="Keating L."/>
            <person name="Wheeler P.R."/>
            <person name="Parkhill J."/>
            <person name="Barrell B.G."/>
            <person name="Cole S.T."/>
            <person name="Gordon S.V."/>
            <person name="Hewinson R.G."/>
        </authorList>
    </citation>
    <scope>NUCLEOTIDE SEQUENCE [LARGE SCALE GENOMIC DNA]</scope>
    <source>
        <strain>ATCC BAA-935 / AF2122/97</strain>
    </source>
</reference>
<reference key="2">
    <citation type="journal article" date="2017" name="Genome Announc.">
        <title>Updated reference genome sequence and annotation of Mycobacterium bovis AF2122/97.</title>
        <authorList>
            <person name="Malone K.M."/>
            <person name="Farrell D."/>
            <person name="Stuber T.P."/>
            <person name="Schubert O.T."/>
            <person name="Aebersold R."/>
            <person name="Robbe-Austerman S."/>
            <person name="Gordon S.V."/>
        </authorList>
    </citation>
    <scope>NUCLEOTIDE SEQUENCE [LARGE SCALE GENOMIC DNA]</scope>
    <scope>GENOME REANNOTATION</scope>
    <source>
        <strain>ATCC BAA-935 / AF2122/97</strain>
    </source>
</reference>
<organism>
    <name type="scientific">Mycobacterium bovis (strain ATCC BAA-935 / AF2122/97)</name>
    <dbReference type="NCBI Taxonomy" id="233413"/>
    <lineage>
        <taxon>Bacteria</taxon>
        <taxon>Bacillati</taxon>
        <taxon>Actinomycetota</taxon>
        <taxon>Actinomycetes</taxon>
        <taxon>Mycobacteriales</taxon>
        <taxon>Mycobacteriaceae</taxon>
        <taxon>Mycobacterium</taxon>
        <taxon>Mycobacterium tuberculosis complex</taxon>
    </lineage>
</organism>
<proteinExistence type="inferred from homology"/>
<dbReference type="EC" id="1.3.99.-"/>
<dbReference type="EMBL" id="LT708304">
    <property type="protein sequence ID" value="SIT99984.1"/>
    <property type="molecule type" value="Genomic_DNA"/>
</dbReference>
<dbReference type="RefSeq" id="NP_855035.1">
    <property type="nucleotide sequence ID" value="NC_002945.3"/>
</dbReference>
<dbReference type="RefSeq" id="WP_003406953.1">
    <property type="nucleotide sequence ID" value="NC_002945.4"/>
</dbReference>
<dbReference type="SMR" id="P63432"/>
<dbReference type="GeneID" id="45425324"/>
<dbReference type="KEGG" id="mbo:BQ2027_MB1381"/>
<dbReference type="PATRIC" id="fig|233413.5.peg.1513"/>
<dbReference type="UniPathway" id="UPA00011"/>
<dbReference type="Proteomes" id="UP000001419">
    <property type="component" value="Chromosome"/>
</dbReference>
<dbReference type="GO" id="GO:0005737">
    <property type="term" value="C:cytoplasm"/>
    <property type="evidence" value="ECO:0007669"/>
    <property type="project" value="TreeGrafter"/>
</dbReference>
<dbReference type="GO" id="GO:0003995">
    <property type="term" value="F:acyl-CoA dehydrogenase activity"/>
    <property type="evidence" value="ECO:0007669"/>
    <property type="project" value="TreeGrafter"/>
</dbReference>
<dbReference type="GO" id="GO:0050660">
    <property type="term" value="F:flavin adenine dinucleotide binding"/>
    <property type="evidence" value="ECO:0007669"/>
    <property type="project" value="InterPro"/>
</dbReference>
<dbReference type="GO" id="GO:0033539">
    <property type="term" value="P:fatty acid beta-oxidation using acyl-CoA dehydrogenase"/>
    <property type="evidence" value="ECO:0007669"/>
    <property type="project" value="TreeGrafter"/>
</dbReference>
<dbReference type="FunFam" id="2.40.110.10:FF:000033">
    <property type="entry name" value="Acyl-[acyl-carrier-protein] dehydrogenase MbtN"/>
    <property type="match status" value="1"/>
</dbReference>
<dbReference type="FunFam" id="1.20.140.10:FF:000039">
    <property type="entry name" value="Acyl-CoA dehydrogenase FadE14"/>
    <property type="match status" value="1"/>
</dbReference>
<dbReference type="Gene3D" id="1.10.540.10">
    <property type="entry name" value="Acyl-CoA dehydrogenase/oxidase, N-terminal domain"/>
    <property type="match status" value="1"/>
</dbReference>
<dbReference type="Gene3D" id="2.40.110.10">
    <property type="entry name" value="Butyryl-CoA Dehydrogenase, subunit A, domain 2"/>
    <property type="match status" value="1"/>
</dbReference>
<dbReference type="Gene3D" id="1.20.140.10">
    <property type="entry name" value="Butyryl-CoA Dehydrogenase, subunit A, domain 3"/>
    <property type="match status" value="1"/>
</dbReference>
<dbReference type="InterPro" id="IPR050741">
    <property type="entry name" value="Acyl-CoA_dehydrogenase"/>
</dbReference>
<dbReference type="InterPro" id="IPR006091">
    <property type="entry name" value="Acyl-CoA_Oxase/DH_mid-dom"/>
</dbReference>
<dbReference type="InterPro" id="IPR046373">
    <property type="entry name" value="Acyl-CoA_Oxase/DH_mid-dom_sf"/>
</dbReference>
<dbReference type="InterPro" id="IPR036250">
    <property type="entry name" value="AcylCo_DH-like_C"/>
</dbReference>
<dbReference type="InterPro" id="IPR009075">
    <property type="entry name" value="AcylCo_DH/oxidase_C"/>
</dbReference>
<dbReference type="InterPro" id="IPR013786">
    <property type="entry name" value="AcylCoA_DH/ox_N"/>
</dbReference>
<dbReference type="InterPro" id="IPR037069">
    <property type="entry name" value="AcylCoA_DH/ox_N_sf"/>
</dbReference>
<dbReference type="InterPro" id="IPR009100">
    <property type="entry name" value="AcylCoA_DH/oxidase_NM_dom_sf"/>
</dbReference>
<dbReference type="NCBIfam" id="NF037942">
    <property type="entry name" value="ac_ACP_DH_MbtN"/>
    <property type="match status" value="1"/>
</dbReference>
<dbReference type="PANTHER" id="PTHR48083:SF20">
    <property type="entry name" value="LONG-CHAIN SPECIFIC ACYL-COA DEHYDROGENASE, MITOCHONDRIAL"/>
    <property type="match status" value="1"/>
</dbReference>
<dbReference type="PANTHER" id="PTHR48083">
    <property type="entry name" value="MEDIUM-CHAIN SPECIFIC ACYL-COA DEHYDROGENASE, MITOCHONDRIAL-RELATED"/>
    <property type="match status" value="1"/>
</dbReference>
<dbReference type="Pfam" id="PF00441">
    <property type="entry name" value="Acyl-CoA_dh_1"/>
    <property type="match status" value="1"/>
</dbReference>
<dbReference type="Pfam" id="PF02770">
    <property type="entry name" value="Acyl-CoA_dh_M"/>
    <property type="match status" value="1"/>
</dbReference>
<dbReference type="Pfam" id="PF02771">
    <property type="entry name" value="Acyl-CoA_dh_N"/>
    <property type="match status" value="1"/>
</dbReference>
<dbReference type="SUPFAM" id="SSF47203">
    <property type="entry name" value="Acyl-CoA dehydrogenase C-terminal domain-like"/>
    <property type="match status" value="1"/>
</dbReference>
<dbReference type="SUPFAM" id="SSF56645">
    <property type="entry name" value="Acyl-CoA dehydrogenase NM domain-like"/>
    <property type="match status" value="1"/>
</dbReference>
<evidence type="ECO:0000250" key="1"/>
<evidence type="ECO:0000305" key="2"/>
<protein>
    <recommendedName>
        <fullName>Acyl-[acyl-carrier-protein] dehydrogenase MbtN</fullName>
        <shortName>Acyl-ACP dehydrogenase MbtN</shortName>
        <ecNumber>1.3.99.-</ecNumber>
    </recommendedName>
    <alternativeName>
        <fullName>Mycobactin synthase protein N</fullName>
    </alternativeName>
</protein>
<accession>P63432</accession>
<accession>A0A1R3XZ20</accession>
<accession>Q11016</accession>
<accession>X2BHU7</accession>
<keyword id="KW-0274">FAD</keyword>
<keyword id="KW-0285">Flavoprotein</keyword>
<keyword id="KW-0560">Oxidoreductase</keyword>
<keyword id="KW-1185">Reference proteome</keyword>
<comment type="function">
    <text evidence="1">Catalyzes the dehydrogenation at the alpha-beta position of ACP-bound acyl chains. This results in the introduction of a double bond in the lipidic chain, which is further transferred to the epsilon-amino group of lysine residue in the mycobactin core by MbtK (By similarity).</text>
</comment>
<comment type="cofactor">
    <cofactor evidence="1">
        <name>FAD</name>
        <dbReference type="ChEBI" id="CHEBI:57692"/>
    </cofactor>
</comment>
<comment type="pathway">
    <text>Siderophore biosynthesis; mycobactin biosynthesis.</text>
</comment>
<comment type="similarity">
    <text evidence="2">Belongs to the acyl-CoA dehydrogenase family.</text>
</comment>
<gene>
    <name type="primary">mbtN</name>
    <name type="synonym">fadE14</name>
    <name type="ordered locus">BQ2027_MB1381</name>
</gene>
<name>MBTN_MYCBO</name>